<proteinExistence type="inferred from homology"/>
<sequence>MISVNDFRTGLTIAVDNGLWQVLDFQHVKPGKGAAFVRSKLRNLRTGSVQEKTFRAGEKVEKAHIENRRMQYLYASGEAHVFMDNGTYEQIELGEKQIERELKFLKENMEVSIMTYQGEVLGVELPNTVELQVTETEPGIKGDTASNVTKPATLETGLVVQVPIFINEGEMLIINTGEGKYVSRA</sequence>
<reference key="1">
    <citation type="journal article" date="2007" name="J. Bacteriol.">
        <title>The complete genome sequence of Bacillus thuringiensis Al Hakam.</title>
        <authorList>
            <person name="Challacombe J.F."/>
            <person name="Altherr M.R."/>
            <person name="Xie G."/>
            <person name="Bhotika S.S."/>
            <person name="Brown N."/>
            <person name="Bruce D."/>
            <person name="Campbell C.S."/>
            <person name="Campbell M.L."/>
            <person name="Chen J."/>
            <person name="Chertkov O."/>
            <person name="Cleland C."/>
            <person name="Dimitrijevic M."/>
            <person name="Doggett N.A."/>
            <person name="Fawcett J.J."/>
            <person name="Glavina T."/>
            <person name="Goodwin L.A."/>
            <person name="Green L.D."/>
            <person name="Han C.S."/>
            <person name="Hill K.K."/>
            <person name="Hitchcock P."/>
            <person name="Jackson P.J."/>
            <person name="Keim P."/>
            <person name="Kewalramani A.R."/>
            <person name="Longmire J."/>
            <person name="Lucas S."/>
            <person name="Malfatti S."/>
            <person name="Martinez D."/>
            <person name="McMurry K."/>
            <person name="Meincke L.J."/>
            <person name="Misra M."/>
            <person name="Moseman B.L."/>
            <person name="Mundt M."/>
            <person name="Munk A.C."/>
            <person name="Okinaka R.T."/>
            <person name="Parson-Quintana B."/>
            <person name="Reilly L.P."/>
            <person name="Richardson P."/>
            <person name="Robinson D.L."/>
            <person name="Saunders E."/>
            <person name="Tapia R."/>
            <person name="Tesmer J.G."/>
            <person name="Thayer N."/>
            <person name="Thompson L.S."/>
            <person name="Tice H."/>
            <person name="Ticknor L.O."/>
            <person name="Wills P.L."/>
            <person name="Gilna P."/>
            <person name="Brettin T.S."/>
        </authorList>
    </citation>
    <scope>NUCLEOTIDE SEQUENCE [LARGE SCALE GENOMIC DNA]</scope>
    <source>
        <strain>Al Hakam</strain>
    </source>
</reference>
<accession>A0RII7</accession>
<comment type="function">
    <text evidence="1">Involved in peptide bond synthesis. Stimulates efficient translation and peptide-bond synthesis on native or reconstituted 70S ribosomes in vitro. Probably functions indirectly by altering the affinity of the ribosome for aminoacyl-tRNA, thus increasing their reactivity as acceptors for peptidyl transferase.</text>
</comment>
<comment type="pathway">
    <text evidence="1">Protein biosynthesis; polypeptide chain elongation.</text>
</comment>
<comment type="subcellular location">
    <subcellularLocation>
        <location evidence="1">Cytoplasm</location>
    </subcellularLocation>
</comment>
<comment type="similarity">
    <text evidence="1">Belongs to the elongation factor P family.</text>
</comment>
<organism>
    <name type="scientific">Bacillus thuringiensis (strain Al Hakam)</name>
    <dbReference type="NCBI Taxonomy" id="412694"/>
    <lineage>
        <taxon>Bacteria</taxon>
        <taxon>Bacillati</taxon>
        <taxon>Bacillota</taxon>
        <taxon>Bacilli</taxon>
        <taxon>Bacillales</taxon>
        <taxon>Bacillaceae</taxon>
        <taxon>Bacillus</taxon>
        <taxon>Bacillus cereus group</taxon>
    </lineage>
</organism>
<evidence type="ECO:0000255" key="1">
    <source>
        <dbReference type="HAMAP-Rule" id="MF_00141"/>
    </source>
</evidence>
<dbReference type="EMBL" id="CP000485">
    <property type="protein sequence ID" value="ABK87030.1"/>
    <property type="molecule type" value="Genomic_DNA"/>
</dbReference>
<dbReference type="RefSeq" id="WP_000626507.1">
    <property type="nucleotide sequence ID" value="NC_008600.1"/>
</dbReference>
<dbReference type="SMR" id="A0RII7"/>
<dbReference type="GeneID" id="45024081"/>
<dbReference type="KEGG" id="btl:BALH_3803"/>
<dbReference type="HOGENOM" id="CLU_074944_0_1_9"/>
<dbReference type="UniPathway" id="UPA00345"/>
<dbReference type="GO" id="GO:0005737">
    <property type="term" value="C:cytoplasm"/>
    <property type="evidence" value="ECO:0007669"/>
    <property type="project" value="UniProtKB-SubCell"/>
</dbReference>
<dbReference type="GO" id="GO:0003746">
    <property type="term" value="F:translation elongation factor activity"/>
    <property type="evidence" value="ECO:0007669"/>
    <property type="project" value="UniProtKB-UniRule"/>
</dbReference>
<dbReference type="GO" id="GO:0043043">
    <property type="term" value="P:peptide biosynthetic process"/>
    <property type="evidence" value="ECO:0007669"/>
    <property type="project" value="InterPro"/>
</dbReference>
<dbReference type="CDD" id="cd04470">
    <property type="entry name" value="S1_EF-P_repeat_1"/>
    <property type="match status" value="1"/>
</dbReference>
<dbReference type="CDD" id="cd05794">
    <property type="entry name" value="S1_EF-P_repeat_2"/>
    <property type="match status" value="1"/>
</dbReference>
<dbReference type="FunFam" id="2.30.30.30:FF:000010">
    <property type="entry name" value="Elongation factor P"/>
    <property type="match status" value="1"/>
</dbReference>
<dbReference type="FunFam" id="2.40.50.140:FF:000004">
    <property type="entry name" value="Elongation factor P"/>
    <property type="match status" value="1"/>
</dbReference>
<dbReference type="FunFam" id="2.40.50.140:FF:000009">
    <property type="entry name" value="Elongation factor P"/>
    <property type="match status" value="1"/>
</dbReference>
<dbReference type="Gene3D" id="2.30.30.30">
    <property type="match status" value="1"/>
</dbReference>
<dbReference type="Gene3D" id="2.40.50.140">
    <property type="entry name" value="Nucleic acid-binding proteins"/>
    <property type="match status" value="2"/>
</dbReference>
<dbReference type="HAMAP" id="MF_00141">
    <property type="entry name" value="EF_P"/>
    <property type="match status" value="1"/>
</dbReference>
<dbReference type="InterPro" id="IPR015365">
    <property type="entry name" value="Elong-fact-P_C"/>
</dbReference>
<dbReference type="InterPro" id="IPR012340">
    <property type="entry name" value="NA-bd_OB-fold"/>
</dbReference>
<dbReference type="InterPro" id="IPR014722">
    <property type="entry name" value="Rib_uL2_dom2"/>
</dbReference>
<dbReference type="InterPro" id="IPR020599">
    <property type="entry name" value="Transl_elong_fac_P/YeiP"/>
</dbReference>
<dbReference type="InterPro" id="IPR013185">
    <property type="entry name" value="Transl_elong_KOW-like"/>
</dbReference>
<dbReference type="InterPro" id="IPR001059">
    <property type="entry name" value="Transl_elong_P/YeiP_cen"/>
</dbReference>
<dbReference type="InterPro" id="IPR013852">
    <property type="entry name" value="Transl_elong_P/YeiP_CS"/>
</dbReference>
<dbReference type="InterPro" id="IPR011768">
    <property type="entry name" value="Transl_elongation_fac_P"/>
</dbReference>
<dbReference type="InterPro" id="IPR008991">
    <property type="entry name" value="Translation_prot_SH3-like_sf"/>
</dbReference>
<dbReference type="NCBIfam" id="TIGR00038">
    <property type="entry name" value="efp"/>
    <property type="match status" value="1"/>
</dbReference>
<dbReference type="NCBIfam" id="NF001810">
    <property type="entry name" value="PRK00529.1"/>
    <property type="match status" value="1"/>
</dbReference>
<dbReference type="PANTHER" id="PTHR30053">
    <property type="entry name" value="ELONGATION FACTOR P"/>
    <property type="match status" value="1"/>
</dbReference>
<dbReference type="PANTHER" id="PTHR30053:SF12">
    <property type="entry name" value="ELONGATION FACTOR P (EF-P) FAMILY PROTEIN"/>
    <property type="match status" value="1"/>
</dbReference>
<dbReference type="Pfam" id="PF01132">
    <property type="entry name" value="EFP"/>
    <property type="match status" value="1"/>
</dbReference>
<dbReference type="Pfam" id="PF08207">
    <property type="entry name" value="EFP_N"/>
    <property type="match status" value="1"/>
</dbReference>
<dbReference type="Pfam" id="PF09285">
    <property type="entry name" value="Elong-fact-P_C"/>
    <property type="match status" value="1"/>
</dbReference>
<dbReference type="PIRSF" id="PIRSF005901">
    <property type="entry name" value="EF-P"/>
    <property type="match status" value="1"/>
</dbReference>
<dbReference type="SMART" id="SM01185">
    <property type="entry name" value="EFP"/>
    <property type="match status" value="1"/>
</dbReference>
<dbReference type="SMART" id="SM00841">
    <property type="entry name" value="Elong-fact-P_C"/>
    <property type="match status" value="1"/>
</dbReference>
<dbReference type="SUPFAM" id="SSF50249">
    <property type="entry name" value="Nucleic acid-binding proteins"/>
    <property type="match status" value="2"/>
</dbReference>
<dbReference type="SUPFAM" id="SSF50104">
    <property type="entry name" value="Translation proteins SH3-like domain"/>
    <property type="match status" value="1"/>
</dbReference>
<dbReference type="PROSITE" id="PS01275">
    <property type="entry name" value="EFP"/>
    <property type="match status" value="1"/>
</dbReference>
<keyword id="KW-0963">Cytoplasm</keyword>
<keyword id="KW-0251">Elongation factor</keyword>
<keyword id="KW-0648">Protein biosynthesis</keyword>
<gene>
    <name evidence="1" type="primary">efp</name>
    <name type="ordered locus">BALH_3803</name>
</gene>
<name>EFP_BACAH</name>
<feature type="chain" id="PRO_1000010682" description="Elongation factor P">
    <location>
        <begin position="1"/>
        <end position="185"/>
    </location>
</feature>
<protein>
    <recommendedName>
        <fullName evidence="1">Elongation factor P</fullName>
        <shortName evidence="1">EF-P</shortName>
    </recommendedName>
</protein>